<proteinExistence type="evidence at protein level"/>
<name>GRXC5_ARATH</name>
<dbReference type="EMBL" id="AL035353">
    <property type="protein sequence ID" value="CAA22979.1"/>
    <property type="status" value="ALT_SEQ"/>
    <property type="molecule type" value="Genomic_DNA"/>
</dbReference>
<dbReference type="EMBL" id="AL161573">
    <property type="protein sequence ID" value="CAB81461.1"/>
    <property type="status" value="ALT_SEQ"/>
    <property type="molecule type" value="Genomic_DNA"/>
</dbReference>
<dbReference type="EMBL" id="CP002687">
    <property type="protein sequence ID" value="AEE85535.1"/>
    <property type="molecule type" value="Genomic_DNA"/>
</dbReference>
<dbReference type="EMBL" id="AK118672">
    <property type="protein sequence ID" value="BAC43267.1"/>
    <property type="molecule type" value="mRNA"/>
</dbReference>
<dbReference type="EMBL" id="BT003703">
    <property type="protein sequence ID" value="AAO39931.1"/>
    <property type="molecule type" value="mRNA"/>
</dbReference>
<dbReference type="PIR" id="T04526">
    <property type="entry name" value="T04526"/>
</dbReference>
<dbReference type="RefSeq" id="NP_194602.2">
    <property type="nucleotide sequence ID" value="NM_119017.5"/>
</dbReference>
<dbReference type="PDB" id="3RHB">
    <property type="method" value="X-ray"/>
    <property type="resolution" value="1.20 A"/>
    <property type="chains" value="A=64-174"/>
</dbReference>
<dbReference type="PDB" id="3RHC">
    <property type="method" value="X-ray"/>
    <property type="resolution" value="2.40 A"/>
    <property type="chains" value="A/B=64-174"/>
</dbReference>
<dbReference type="PDBsum" id="3RHB"/>
<dbReference type="PDBsum" id="3RHC"/>
<dbReference type="SMR" id="Q8GWS0"/>
<dbReference type="BioGRID" id="14281">
    <property type="interactions" value="5"/>
</dbReference>
<dbReference type="FunCoup" id="Q8GWS0">
    <property type="interactions" value="502"/>
</dbReference>
<dbReference type="IntAct" id="Q8GWS0">
    <property type="interactions" value="2"/>
</dbReference>
<dbReference type="STRING" id="3702.Q8GWS0"/>
<dbReference type="iPTMnet" id="Q8GWS0"/>
<dbReference type="PaxDb" id="3702-AT4G28730.1"/>
<dbReference type="ProteomicsDB" id="222279"/>
<dbReference type="EnsemblPlants" id="AT4G28730.1">
    <property type="protein sequence ID" value="AT4G28730.1"/>
    <property type="gene ID" value="AT4G28730"/>
</dbReference>
<dbReference type="GeneID" id="828994"/>
<dbReference type="Gramene" id="AT4G28730.1">
    <property type="protein sequence ID" value="AT4G28730.1"/>
    <property type="gene ID" value="AT4G28730"/>
</dbReference>
<dbReference type="KEGG" id="ath:AT4G28730"/>
<dbReference type="Araport" id="AT4G28730"/>
<dbReference type="TAIR" id="AT4G28730">
    <property type="gene designation" value="GRXC5"/>
</dbReference>
<dbReference type="eggNOG" id="KOG1752">
    <property type="taxonomic scope" value="Eukaryota"/>
</dbReference>
<dbReference type="HOGENOM" id="CLU_026126_5_2_1"/>
<dbReference type="InParanoid" id="Q8GWS0"/>
<dbReference type="OMA" id="GVEPMVI"/>
<dbReference type="OrthoDB" id="418495at2759"/>
<dbReference type="PhylomeDB" id="Q8GWS0"/>
<dbReference type="EvolutionaryTrace" id="Q8GWS0"/>
<dbReference type="PRO" id="PR:Q8GWS0"/>
<dbReference type="Proteomes" id="UP000006548">
    <property type="component" value="Chromosome 4"/>
</dbReference>
<dbReference type="ExpressionAtlas" id="Q8GWS0">
    <property type="expression patterns" value="baseline and differential"/>
</dbReference>
<dbReference type="GO" id="GO:0009507">
    <property type="term" value="C:chloroplast"/>
    <property type="evidence" value="ECO:0007005"/>
    <property type="project" value="TAIR"/>
</dbReference>
<dbReference type="GO" id="GO:0016226">
    <property type="term" value="P:iron-sulfur cluster assembly"/>
    <property type="evidence" value="ECO:0000314"/>
    <property type="project" value="TAIR"/>
</dbReference>
<dbReference type="CDD" id="cd03419">
    <property type="entry name" value="GRX_GRXh_1_2_like"/>
    <property type="match status" value="1"/>
</dbReference>
<dbReference type="FunFam" id="3.40.30.10:FF:000217">
    <property type="entry name" value="Glutaredoxin-C5 chloroplastic"/>
    <property type="match status" value="1"/>
</dbReference>
<dbReference type="Gene3D" id="3.40.30.10">
    <property type="entry name" value="Glutaredoxin"/>
    <property type="match status" value="1"/>
</dbReference>
<dbReference type="InterPro" id="IPR002109">
    <property type="entry name" value="Glutaredoxin"/>
</dbReference>
<dbReference type="InterPro" id="IPR011899">
    <property type="entry name" value="Glutaredoxin_euk/vir"/>
</dbReference>
<dbReference type="InterPro" id="IPR014025">
    <property type="entry name" value="Glutaredoxin_subgr"/>
</dbReference>
<dbReference type="InterPro" id="IPR036249">
    <property type="entry name" value="Thioredoxin-like_sf"/>
</dbReference>
<dbReference type="NCBIfam" id="TIGR02180">
    <property type="entry name" value="GRX_euk"/>
    <property type="match status" value="1"/>
</dbReference>
<dbReference type="PANTHER" id="PTHR45694">
    <property type="entry name" value="GLUTAREDOXIN 2"/>
    <property type="match status" value="1"/>
</dbReference>
<dbReference type="PANTHER" id="PTHR45694:SF18">
    <property type="entry name" value="GLUTAREDOXIN-1-RELATED"/>
    <property type="match status" value="1"/>
</dbReference>
<dbReference type="Pfam" id="PF00462">
    <property type="entry name" value="Glutaredoxin"/>
    <property type="match status" value="1"/>
</dbReference>
<dbReference type="PRINTS" id="PR00160">
    <property type="entry name" value="GLUTAREDOXIN"/>
</dbReference>
<dbReference type="SUPFAM" id="SSF52833">
    <property type="entry name" value="Thioredoxin-like"/>
    <property type="match status" value="1"/>
</dbReference>
<dbReference type="PROSITE" id="PS51354">
    <property type="entry name" value="GLUTAREDOXIN_2"/>
    <property type="match status" value="1"/>
</dbReference>
<reference key="1">
    <citation type="journal article" date="1999" name="Nature">
        <title>Sequence and analysis of chromosome 4 of the plant Arabidopsis thaliana.</title>
        <authorList>
            <person name="Mayer K.F.X."/>
            <person name="Schueller C."/>
            <person name="Wambutt R."/>
            <person name="Murphy G."/>
            <person name="Volckaert G."/>
            <person name="Pohl T."/>
            <person name="Duesterhoeft A."/>
            <person name="Stiekema W."/>
            <person name="Entian K.-D."/>
            <person name="Terryn N."/>
            <person name="Harris B."/>
            <person name="Ansorge W."/>
            <person name="Brandt P."/>
            <person name="Grivell L.A."/>
            <person name="Rieger M."/>
            <person name="Weichselgartner M."/>
            <person name="de Simone V."/>
            <person name="Obermaier B."/>
            <person name="Mache R."/>
            <person name="Mueller M."/>
            <person name="Kreis M."/>
            <person name="Delseny M."/>
            <person name="Puigdomenech P."/>
            <person name="Watson M."/>
            <person name="Schmidtheini T."/>
            <person name="Reichert B."/>
            <person name="Portetelle D."/>
            <person name="Perez-Alonso M."/>
            <person name="Boutry M."/>
            <person name="Bancroft I."/>
            <person name="Vos P."/>
            <person name="Hoheisel J."/>
            <person name="Zimmermann W."/>
            <person name="Wedler H."/>
            <person name="Ridley P."/>
            <person name="Langham S.-A."/>
            <person name="McCullagh B."/>
            <person name="Bilham L."/>
            <person name="Robben J."/>
            <person name="van der Schueren J."/>
            <person name="Grymonprez B."/>
            <person name="Chuang Y.-J."/>
            <person name="Vandenbussche F."/>
            <person name="Braeken M."/>
            <person name="Weltjens I."/>
            <person name="Voet M."/>
            <person name="Bastiaens I."/>
            <person name="Aert R."/>
            <person name="Defoor E."/>
            <person name="Weitzenegger T."/>
            <person name="Bothe G."/>
            <person name="Ramsperger U."/>
            <person name="Hilbert H."/>
            <person name="Braun M."/>
            <person name="Holzer E."/>
            <person name="Brandt A."/>
            <person name="Peters S."/>
            <person name="van Staveren M."/>
            <person name="Dirkse W."/>
            <person name="Mooijman P."/>
            <person name="Klein Lankhorst R."/>
            <person name="Rose M."/>
            <person name="Hauf J."/>
            <person name="Koetter P."/>
            <person name="Berneiser S."/>
            <person name="Hempel S."/>
            <person name="Feldpausch M."/>
            <person name="Lamberth S."/>
            <person name="Van den Daele H."/>
            <person name="De Keyser A."/>
            <person name="Buysshaert C."/>
            <person name="Gielen J."/>
            <person name="Villarroel R."/>
            <person name="De Clercq R."/>
            <person name="van Montagu M."/>
            <person name="Rogers J."/>
            <person name="Cronin A."/>
            <person name="Quail M.A."/>
            <person name="Bray-Allen S."/>
            <person name="Clark L."/>
            <person name="Doggett J."/>
            <person name="Hall S."/>
            <person name="Kay M."/>
            <person name="Lennard N."/>
            <person name="McLay K."/>
            <person name="Mayes R."/>
            <person name="Pettett A."/>
            <person name="Rajandream M.A."/>
            <person name="Lyne M."/>
            <person name="Benes V."/>
            <person name="Rechmann S."/>
            <person name="Borkova D."/>
            <person name="Bloecker H."/>
            <person name="Scharfe M."/>
            <person name="Grimm M."/>
            <person name="Loehnert T.-H."/>
            <person name="Dose S."/>
            <person name="de Haan M."/>
            <person name="Maarse A.C."/>
            <person name="Schaefer M."/>
            <person name="Mueller-Auer S."/>
            <person name="Gabel C."/>
            <person name="Fuchs M."/>
            <person name="Fartmann B."/>
            <person name="Granderath K."/>
            <person name="Dauner D."/>
            <person name="Herzl A."/>
            <person name="Neumann S."/>
            <person name="Argiriou A."/>
            <person name="Vitale D."/>
            <person name="Liguori R."/>
            <person name="Piravandi E."/>
            <person name="Massenet O."/>
            <person name="Quigley F."/>
            <person name="Clabauld G."/>
            <person name="Muendlein A."/>
            <person name="Felber R."/>
            <person name="Schnabl S."/>
            <person name="Hiller R."/>
            <person name="Schmidt W."/>
            <person name="Lecharny A."/>
            <person name="Aubourg S."/>
            <person name="Chefdor F."/>
            <person name="Cooke R."/>
            <person name="Berger C."/>
            <person name="Monfort A."/>
            <person name="Casacuberta E."/>
            <person name="Gibbons T."/>
            <person name="Weber N."/>
            <person name="Vandenbol M."/>
            <person name="Bargues M."/>
            <person name="Terol J."/>
            <person name="Torres A."/>
            <person name="Perez-Perez A."/>
            <person name="Purnelle B."/>
            <person name="Bent E."/>
            <person name="Johnson S."/>
            <person name="Tacon D."/>
            <person name="Jesse T."/>
            <person name="Heijnen L."/>
            <person name="Schwarz S."/>
            <person name="Scholler P."/>
            <person name="Heber S."/>
            <person name="Francs P."/>
            <person name="Bielke C."/>
            <person name="Frishman D."/>
            <person name="Haase D."/>
            <person name="Lemcke K."/>
            <person name="Mewes H.-W."/>
            <person name="Stocker S."/>
            <person name="Zaccaria P."/>
            <person name="Bevan M."/>
            <person name="Wilson R.K."/>
            <person name="de la Bastide M."/>
            <person name="Habermann K."/>
            <person name="Parnell L."/>
            <person name="Dedhia N."/>
            <person name="Gnoj L."/>
            <person name="Schutz K."/>
            <person name="Huang E."/>
            <person name="Spiegel L."/>
            <person name="Sekhon M."/>
            <person name="Murray J."/>
            <person name="Sheet P."/>
            <person name="Cordes M."/>
            <person name="Abu-Threideh J."/>
            <person name="Stoneking T."/>
            <person name="Kalicki J."/>
            <person name="Graves T."/>
            <person name="Harmon G."/>
            <person name="Edwards J."/>
            <person name="Latreille P."/>
            <person name="Courtney L."/>
            <person name="Cloud J."/>
            <person name="Abbott A."/>
            <person name="Scott K."/>
            <person name="Johnson D."/>
            <person name="Minx P."/>
            <person name="Bentley D."/>
            <person name="Fulton B."/>
            <person name="Miller N."/>
            <person name="Greco T."/>
            <person name="Kemp K."/>
            <person name="Kramer J."/>
            <person name="Fulton L."/>
            <person name="Mardis E."/>
            <person name="Dante M."/>
            <person name="Pepin K."/>
            <person name="Hillier L.W."/>
            <person name="Nelson J."/>
            <person name="Spieth J."/>
            <person name="Ryan E."/>
            <person name="Andrews S."/>
            <person name="Geisel C."/>
            <person name="Layman D."/>
            <person name="Du H."/>
            <person name="Ali J."/>
            <person name="Berghoff A."/>
            <person name="Jones K."/>
            <person name="Drone K."/>
            <person name="Cotton M."/>
            <person name="Joshu C."/>
            <person name="Antonoiu B."/>
            <person name="Zidanic M."/>
            <person name="Strong C."/>
            <person name="Sun H."/>
            <person name="Lamar B."/>
            <person name="Yordan C."/>
            <person name="Ma P."/>
            <person name="Zhong J."/>
            <person name="Preston R."/>
            <person name="Vil D."/>
            <person name="Shekher M."/>
            <person name="Matero A."/>
            <person name="Shah R."/>
            <person name="Swaby I.K."/>
            <person name="O'Shaughnessy A."/>
            <person name="Rodriguez M."/>
            <person name="Hoffman J."/>
            <person name="Till S."/>
            <person name="Granat S."/>
            <person name="Shohdy N."/>
            <person name="Hasegawa A."/>
            <person name="Hameed A."/>
            <person name="Lodhi M."/>
            <person name="Johnson A."/>
            <person name="Chen E."/>
            <person name="Marra M.A."/>
            <person name="Martienssen R."/>
            <person name="McCombie W.R."/>
        </authorList>
    </citation>
    <scope>NUCLEOTIDE SEQUENCE [LARGE SCALE GENOMIC DNA]</scope>
    <source>
        <strain>cv. Columbia</strain>
    </source>
</reference>
<reference key="2">
    <citation type="journal article" date="2017" name="Plant J.">
        <title>Araport11: a complete reannotation of the Arabidopsis thaliana reference genome.</title>
        <authorList>
            <person name="Cheng C.Y."/>
            <person name="Krishnakumar V."/>
            <person name="Chan A.P."/>
            <person name="Thibaud-Nissen F."/>
            <person name="Schobel S."/>
            <person name="Town C.D."/>
        </authorList>
    </citation>
    <scope>GENOME REANNOTATION</scope>
    <source>
        <strain>cv. Columbia</strain>
    </source>
</reference>
<reference key="3">
    <citation type="journal article" date="2002" name="Science">
        <title>Functional annotation of a full-length Arabidopsis cDNA collection.</title>
        <authorList>
            <person name="Seki M."/>
            <person name="Narusaka M."/>
            <person name="Kamiya A."/>
            <person name="Ishida J."/>
            <person name="Satou M."/>
            <person name="Sakurai T."/>
            <person name="Nakajima M."/>
            <person name="Enju A."/>
            <person name="Akiyama K."/>
            <person name="Oono Y."/>
            <person name="Muramatsu M."/>
            <person name="Hayashizaki Y."/>
            <person name="Kawai J."/>
            <person name="Carninci P."/>
            <person name="Itoh M."/>
            <person name="Ishii Y."/>
            <person name="Arakawa T."/>
            <person name="Shibata K."/>
            <person name="Shinagawa A."/>
            <person name="Shinozaki K."/>
        </authorList>
    </citation>
    <scope>NUCLEOTIDE SEQUENCE [LARGE SCALE MRNA]</scope>
    <source>
        <strain>cv. Columbia</strain>
    </source>
</reference>
<reference key="4">
    <citation type="journal article" date="2003" name="Science">
        <title>Empirical analysis of transcriptional activity in the Arabidopsis genome.</title>
        <authorList>
            <person name="Yamada K."/>
            <person name="Lim J."/>
            <person name="Dale J.M."/>
            <person name="Chen H."/>
            <person name="Shinn P."/>
            <person name="Palm C.J."/>
            <person name="Southwick A.M."/>
            <person name="Wu H.C."/>
            <person name="Kim C.J."/>
            <person name="Nguyen M."/>
            <person name="Pham P.K."/>
            <person name="Cheuk R.F."/>
            <person name="Karlin-Newmann G."/>
            <person name="Liu S.X."/>
            <person name="Lam B."/>
            <person name="Sakano H."/>
            <person name="Wu T."/>
            <person name="Yu G."/>
            <person name="Miranda M."/>
            <person name="Quach H.L."/>
            <person name="Tripp M."/>
            <person name="Chang C.H."/>
            <person name="Lee J.M."/>
            <person name="Toriumi M.J."/>
            <person name="Chan M.M."/>
            <person name="Tang C.C."/>
            <person name="Onodera C.S."/>
            <person name="Deng J.M."/>
            <person name="Akiyama K."/>
            <person name="Ansari Y."/>
            <person name="Arakawa T."/>
            <person name="Banh J."/>
            <person name="Banno F."/>
            <person name="Bowser L."/>
            <person name="Brooks S.Y."/>
            <person name="Carninci P."/>
            <person name="Chao Q."/>
            <person name="Choy N."/>
            <person name="Enju A."/>
            <person name="Goldsmith A.D."/>
            <person name="Gurjal M."/>
            <person name="Hansen N.F."/>
            <person name="Hayashizaki Y."/>
            <person name="Johnson-Hopson C."/>
            <person name="Hsuan V.W."/>
            <person name="Iida K."/>
            <person name="Karnes M."/>
            <person name="Khan S."/>
            <person name="Koesema E."/>
            <person name="Ishida J."/>
            <person name="Jiang P.X."/>
            <person name="Jones T."/>
            <person name="Kawai J."/>
            <person name="Kamiya A."/>
            <person name="Meyers C."/>
            <person name="Nakajima M."/>
            <person name="Narusaka M."/>
            <person name="Seki M."/>
            <person name="Sakurai T."/>
            <person name="Satou M."/>
            <person name="Tamse R."/>
            <person name="Vaysberg M."/>
            <person name="Wallender E.K."/>
            <person name="Wong C."/>
            <person name="Yamamura Y."/>
            <person name="Yuan S."/>
            <person name="Shinozaki K."/>
            <person name="Davis R.W."/>
            <person name="Theologis A."/>
            <person name="Ecker J.R."/>
        </authorList>
    </citation>
    <scope>NUCLEOTIDE SEQUENCE [LARGE SCALE MRNA]</scope>
    <source>
        <strain>cv. Columbia</strain>
    </source>
</reference>
<reference key="5">
    <citation type="journal article" date="2004" name="Cell. Mol. Life Sci.">
        <title>Plant glutaredoxins: still mysterious reducing systems.</title>
        <authorList>
            <person name="Rouhier N."/>
            <person name="Gelhaye E."/>
            <person name="Jacquot J.-P."/>
        </authorList>
    </citation>
    <scope>GENE FAMILY</scope>
    <scope>NOMENCLATURE</scope>
</reference>
<reference key="6">
    <citation type="journal article" date="2006" name="J. Exp. Bot.">
        <title>Genome-wide analysis of plant glutaredoxin systems.</title>
        <authorList>
            <person name="Rouhier N."/>
            <person name="Couturier J."/>
            <person name="Jacquot J.-P."/>
        </authorList>
    </citation>
    <scope>GENE FAMILY</scope>
</reference>
<reference key="7">
    <citation type="journal article" date="2012" name="Mol. Cell. Proteomics">
        <title>Comparative large-scale characterisation of plant vs. mammal proteins reveals similar and idiosyncratic N-alpha acetylation features.</title>
        <authorList>
            <person name="Bienvenut W.V."/>
            <person name="Sumpton D."/>
            <person name="Martinez A."/>
            <person name="Lilla S."/>
            <person name="Espagne C."/>
            <person name="Meinnel T."/>
            <person name="Giglione C."/>
        </authorList>
    </citation>
    <scope>ACETYLATION [LARGE SCALE ANALYSIS] AT THR-52</scope>
    <scope>CLEAVAGE OF TRANSIT PEPTIDE [LARGE SCALE ANALYSIS] AFTER MET-51</scope>
    <scope>IDENTIFICATION BY MASS SPECTROMETRY [LARGE SCALE ANALYSIS]</scope>
</reference>
<reference key="8">
    <citation type="journal article" date="2014" name="Mol. Plant">
        <title>Monothiol glutaredoxin-BolA interactions: redox control of Arabidopsis thaliana BolA2 and SufE1.</title>
        <authorList>
            <person name="Couturier J."/>
            <person name="Wu H.C."/>
            <person name="Dhalleine T."/>
            <person name="Pegeot H."/>
            <person name="Sudre D."/>
            <person name="Gualberto J.M."/>
            <person name="Jacquot J.P."/>
            <person name="Gaymard F."/>
            <person name="Vignols F."/>
            <person name="Rouhier N."/>
        </authorList>
    </citation>
    <scope>LACK OF INTERACTION WITH SUFE1; BOLA1; BOLA2 AND BOLA4</scope>
</reference>
<reference key="9">
    <citation type="journal article" date="2011" name="J. Biol. Chem.">
        <title>Arabidopsis chloroplastic glutaredoxin C5 as a model to explore molecular determinants for iron-sulfur cluster binding into glutaredoxins.</title>
        <authorList>
            <person name="Couturier J."/>
            <person name="Stroher E."/>
            <person name="Albetel A.N."/>
            <person name="Roret T."/>
            <person name="Muthuramalingam M."/>
            <person name="Tarrago L."/>
            <person name="Seidel T."/>
            <person name="Tsan P."/>
            <person name="Jacquot J.P."/>
            <person name="Johnson M.K."/>
            <person name="Dietz K.J."/>
            <person name="Didierjean C."/>
            <person name="Rouhier N."/>
        </authorList>
    </citation>
    <scope>X-RAY CRYSTALLOGRAPHY (1.20 ANGSTROMS) OF 64-174 OF APO- AND HOLOFORMS IN COMPLEX WITH GLUTATHIONE</scope>
    <scope>FUNCTION</scope>
    <scope>BIOPHYSICOCHEMICAL PROPERTIES</scope>
    <scope>SUBCELLULAR LOCATION</scope>
    <scope>INDUCTION BY COLD</scope>
    <scope>SUBUNIT</scope>
    <scope>MUTAGENESIS OF CYS-90; CYS-93; CYS-141 AND CYS-148</scope>
    <scope>GLUTATHIONYLATION AT CYS-90 AND CYS-148</scope>
</reference>
<organism>
    <name type="scientific">Arabidopsis thaliana</name>
    <name type="common">Mouse-ear cress</name>
    <dbReference type="NCBI Taxonomy" id="3702"/>
    <lineage>
        <taxon>Eukaryota</taxon>
        <taxon>Viridiplantae</taxon>
        <taxon>Streptophyta</taxon>
        <taxon>Embryophyta</taxon>
        <taxon>Tracheophyta</taxon>
        <taxon>Spermatophyta</taxon>
        <taxon>Magnoliopsida</taxon>
        <taxon>eudicotyledons</taxon>
        <taxon>Gunneridae</taxon>
        <taxon>Pentapetalae</taxon>
        <taxon>rosids</taxon>
        <taxon>malvids</taxon>
        <taxon>Brassicales</taxon>
        <taxon>Brassicaceae</taxon>
        <taxon>Camelineae</taxon>
        <taxon>Arabidopsis</taxon>
    </lineage>
</organism>
<accession>Q8GWS0</accession>
<accession>Q9SVU1</accession>
<feature type="transit peptide" description="Chloroplast" evidence="6 9">
    <location>
        <begin position="1"/>
        <end position="51"/>
    </location>
</feature>
<feature type="chain" id="PRO_0000268712" description="Glutaredoxin-C5, chloroplastic">
    <location>
        <begin position="52"/>
        <end position="174"/>
    </location>
</feature>
<feature type="domain" description="Glutaredoxin" evidence="2">
    <location>
        <begin position="93"/>
        <end position="171"/>
    </location>
</feature>
<feature type="binding site" evidence="3">
    <location>
        <position position="135"/>
    </location>
    <ligand>
        <name>glutathione</name>
        <dbReference type="ChEBI" id="CHEBI:57925"/>
    </ligand>
</feature>
<feature type="binding site" evidence="3">
    <location>
        <position position="148"/>
    </location>
    <ligand>
        <name>glutathione</name>
        <dbReference type="ChEBI" id="CHEBI:57925"/>
    </ligand>
</feature>
<feature type="binding site" evidence="3">
    <location>
        <position position="149"/>
    </location>
    <ligand>
        <name>glutathione</name>
        <dbReference type="ChEBI" id="CHEBI:57925"/>
    </ligand>
</feature>
<feature type="modified residue" description="N-acetylthreonine" evidence="9">
    <location>
        <position position="52"/>
    </location>
</feature>
<feature type="modified residue" description="S-glutathionyl cysteine; partial" evidence="3">
    <location>
        <position position="90"/>
    </location>
</feature>
<feature type="modified residue" description="S-glutathionyl cysteine; partial" evidence="3">
    <location>
        <position position="148"/>
    </location>
</feature>
<feature type="disulfide bond" description="Redox-active" evidence="1">
    <location>
        <begin position="90"/>
        <end position="93"/>
    </location>
</feature>
<feature type="mutagenesis site" description="Loss of Fe-S cluster incorporation and loss of glutaredoxin activity." evidence="3">
    <original>C</original>
    <variation>S</variation>
    <location>
        <position position="90"/>
    </location>
</feature>
<feature type="mutagenesis site" description="Loss of Fe-S cluster incorporation, but increased glutaredoxin activity." evidence="3">
    <original>C</original>
    <variation>S</variation>
    <location>
        <position position="93"/>
    </location>
</feature>
<feature type="mutagenesis site" description="No effect on Fe-S cluster incorporation or on glutaredoxin activity." evidence="3">
    <original>C</original>
    <variation>S</variation>
    <location>
        <position position="141"/>
    </location>
</feature>
<feature type="mutagenesis site" description="No effect on Fe-S cluster incorporation or on glutaredoxin activity." evidence="3">
    <original>C</original>
    <variation>S</variation>
    <location>
        <position position="148"/>
    </location>
</feature>
<feature type="helix" evidence="10">
    <location>
        <begin position="68"/>
        <end position="79"/>
    </location>
</feature>
<feature type="strand" evidence="10">
    <location>
        <begin position="80"/>
        <end position="86"/>
    </location>
</feature>
<feature type="helix" evidence="10">
    <location>
        <begin position="91"/>
        <end position="102"/>
    </location>
</feature>
<feature type="strand" evidence="10">
    <location>
        <begin position="108"/>
        <end position="111"/>
    </location>
</feature>
<feature type="helix" evidence="10">
    <location>
        <begin position="112"/>
        <end position="114"/>
    </location>
</feature>
<feature type="helix" evidence="10">
    <location>
        <begin position="118"/>
        <end position="130"/>
    </location>
</feature>
<feature type="strand" evidence="10">
    <location>
        <begin position="137"/>
        <end position="140"/>
    </location>
</feature>
<feature type="strand" evidence="10">
    <location>
        <begin position="143"/>
        <end position="147"/>
    </location>
</feature>
<feature type="helix" evidence="10">
    <location>
        <begin position="148"/>
        <end position="156"/>
    </location>
</feature>
<feature type="helix" evidence="10">
    <location>
        <begin position="159"/>
        <end position="164"/>
    </location>
</feature>
<comment type="function">
    <text evidence="3">Has a glutathione-disulfide oxidoreductase activity in the presence of NADPH and glutathione reductase. Reduces low molecular weight disulfides and proteins. Can assemble a [2Fe-2S] cluster, but cannot transfer it to an apoferredoxin.</text>
</comment>
<comment type="biophysicochemical properties">
    <kinetics>
        <KM evidence="3">0.2 mM for glutathionylated beta-mercaptoethanol</KM>
        <KM evidence="3">0.21 mM for dehydroascorbate</KM>
        <KM evidence="3">3.6 mM for reduced glutathione</KM>
        <text evidence="3">kcat is 1.21 sec(-1) with glutathionylated beta-mercaptoethanol as substrate. kcat is 0.23 sec(-1) with dehydroascorbate as substrate. kcat is 0.69 sec(-1) with reduced glutathione as substrate.</text>
    </kinetics>
</comment>
<comment type="subunit">
    <text evidence="3 4">Monomeric apoprotein and homodimeric holoprotein containing a [2Fe-2S] cluster (PubMed:21632542). No in vitro interactions with SUFE1, BOLA1, BOLA2 or BOLA4 (PubMed:24203231).</text>
</comment>
<comment type="subcellular location">
    <subcellularLocation>
        <location evidence="3">Plastid</location>
        <location evidence="3">Chloroplast</location>
    </subcellularLocation>
</comment>
<comment type="induction">
    <text evidence="3">Up-regulated by cold treatment.</text>
</comment>
<comment type="PTM">
    <text evidence="3">Glutathionylated.</text>
</comment>
<comment type="similarity">
    <text evidence="6">Belongs to the glutaredoxin family. CPYC subfamily.</text>
</comment>
<comment type="sequence caution" evidence="6">
    <conflict type="erroneous gene model prediction">
        <sequence resource="EMBL-CDS" id="CAA22979"/>
    </conflict>
</comment>
<comment type="sequence caution" evidence="6">
    <conflict type="erroneous gene model prediction">
        <sequence resource="EMBL-CDS" id="CAB81461"/>
    </conflict>
</comment>
<protein>
    <recommendedName>
        <fullName evidence="5">Glutaredoxin-C5, chloroplastic</fullName>
        <shortName evidence="5">AtGrxC5</shortName>
    </recommendedName>
</protein>
<sequence>MAVTAFNTLKLVSSSLDPIPSVSCSSYSFSLIYVGSPYKRCLKQSCSVRAMTSSSSAASSSSSSFGSRMEESIRKTVTENTVVIYSKTWCSYCTEVKTLFKRLGVQPLVVELDQLGPQGPQLQKVLERLTGQHTVPNVFVCGKHIGGCTDTVKLNRKGDLELMLAEANGKNGQS</sequence>
<keyword id="KW-0002">3D-structure</keyword>
<keyword id="KW-0007">Acetylation</keyword>
<keyword id="KW-0150">Chloroplast</keyword>
<keyword id="KW-1015">Disulfide bond</keyword>
<keyword id="KW-0249">Electron transport</keyword>
<keyword id="KW-0318">Glutathionylation</keyword>
<keyword id="KW-0934">Plastid</keyword>
<keyword id="KW-0676">Redox-active center</keyword>
<keyword id="KW-1185">Reference proteome</keyword>
<keyword id="KW-0809">Transit peptide</keyword>
<keyword id="KW-0813">Transport</keyword>
<evidence type="ECO:0000250" key="1">
    <source>
        <dbReference type="UniProtKB" id="P25373"/>
    </source>
</evidence>
<evidence type="ECO:0000255" key="2">
    <source>
        <dbReference type="PROSITE-ProRule" id="PRU00686"/>
    </source>
</evidence>
<evidence type="ECO:0000269" key="3">
    <source>
    </source>
</evidence>
<evidence type="ECO:0000269" key="4">
    <source>
    </source>
</evidence>
<evidence type="ECO:0000303" key="5">
    <source>
    </source>
</evidence>
<evidence type="ECO:0000305" key="6"/>
<evidence type="ECO:0000312" key="7">
    <source>
        <dbReference type="Araport" id="AT4G28730"/>
    </source>
</evidence>
<evidence type="ECO:0000312" key="8">
    <source>
        <dbReference type="EMBL" id="CAA22979.1"/>
    </source>
</evidence>
<evidence type="ECO:0007744" key="9">
    <source>
    </source>
</evidence>
<evidence type="ECO:0007829" key="10">
    <source>
        <dbReference type="PDB" id="3RHB"/>
    </source>
</evidence>
<gene>
    <name evidence="5" type="primary">GRXC5</name>
    <name evidence="7" type="ordered locus">At4g28730</name>
    <name evidence="8" type="ORF">F16A16.160</name>
</gene>